<gene>
    <name evidence="1" type="primary">mhpF</name>
    <name type="ordered locus">EcE24377A_0375</name>
</gene>
<evidence type="ECO:0000255" key="1">
    <source>
        <dbReference type="HAMAP-Rule" id="MF_01657"/>
    </source>
</evidence>
<protein>
    <recommendedName>
        <fullName evidence="1">Acetaldehyde dehydrogenase</fullName>
        <ecNumber evidence="1">1.2.1.10</ecNumber>
    </recommendedName>
    <alternativeName>
        <fullName evidence="1">Acetaldehyde dehydrogenase [acetylating]</fullName>
    </alternativeName>
</protein>
<comment type="function">
    <text evidence="1">Catalyzes the conversion of acetaldehyde to acetyl-CoA, using NAD(+) and coenzyme A. Is the final enzyme in the meta-cleavage pathway for the degradation of aromatic compounds.</text>
</comment>
<comment type="catalytic activity">
    <reaction evidence="1">
        <text>acetaldehyde + NAD(+) + CoA = acetyl-CoA + NADH + H(+)</text>
        <dbReference type="Rhea" id="RHEA:23288"/>
        <dbReference type="ChEBI" id="CHEBI:15343"/>
        <dbReference type="ChEBI" id="CHEBI:15378"/>
        <dbReference type="ChEBI" id="CHEBI:57287"/>
        <dbReference type="ChEBI" id="CHEBI:57288"/>
        <dbReference type="ChEBI" id="CHEBI:57540"/>
        <dbReference type="ChEBI" id="CHEBI:57945"/>
        <dbReference type="EC" id="1.2.1.10"/>
    </reaction>
</comment>
<comment type="pathway">
    <text evidence="1">Aromatic compound metabolism; 3-phenylpropanoate degradation.</text>
</comment>
<comment type="subunit">
    <text evidence="1">Interacts with MhpE.</text>
</comment>
<comment type="similarity">
    <text evidence="1">Belongs to the acetaldehyde dehydrogenase family.</text>
</comment>
<name>ACDH_ECO24</name>
<accession>A7ZI98</accession>
<sequence length="316" mass="33442">MSKRKVAIIGSGNIGTDLMIKILRHGQHLEMAVMVGIDPQSDGLARARRMGVATTHEGVIGLMNMPEFADIDIVFDATSAGAHVKNDAALREAKPDIRLIDLTPAAIGPYCVPVVNLEANVDQLNVNMVTCGGQATIPMVAAVSRVARVHYAEIIASIASKSAGPGTRANIDEFTETTSRAIEVVGGAAKGKAIIVLNPAEPPLMMRDTVYVLSDEASQDDIEASINEMAEAVQAYVPGYRLKQRVQFEVIPQDKPVNLPGVGQFSGLKTAVWLEVEGAAHYLPAYAGNLDIMTSSALATAEKMAQSLARKAGEAA</sequence>
<proteinExistence type="inferred from homology"/>
<dbReference type="EC" id="1.2.1.10" evidence="1"/>
<dbReference type="EMBL" id="CP000800">
    <property type="protein sequence ID" value="ABV17887.1"/>
    <property type="molecule type" value="Genomic_DNA"/>
</dbReference>
<dbReference type="RefSeq" id="WP_000044314.1">
    <property type="nucleotide sequence ID" value="NC_009801.1"/>
</dbReference>
<dbReference type="SMR" id="A7ZI98"/>
<dbReference type="GeneID" id="93777104"/>
<dbReference type="KEGG" id="ecw:EcE24377A_0375"/>
<dbReference type="HOGENOM" id="CLU_062208_0_0_6"/>
<dbReference type="UniPathway" id="UPA00714"/>
<dbReference type="Proteomes" id="UP000001122">
    <property type="component" value="Chromosome"/>
</dbReference>
<dbReference type="GO" id="GO:0008774">
    <property type="term" value="F:acetaldehyde dehydrogenase (acetylating) activity"/>
    <property type="evidence" value="ECO:0007669"/>
    <property type="project" value="UniProtKB-UniRule"/>
</dbReference>
<dbReference type="GO" id="GO:0051287">
    <property type="term" value="F:NAD binding"/>
    <property type="evidence" value="ECO:0007669"/>
    <property type="project" value="UniProtKB-UniRule"/>
</dbReference>
<dbReference type="GO" id="GO:0019380">
    <property type="term" value="P:3-phenylpropionate catabolic process"/>
    <property type="evidence" value="ECO:0007669"/>
    <property type="project" value="UniProtKB-UniRule"/>
</dbReference>
<dbReference type="CDD" id="cd23933">
    <property type="entry name" value="ALDH_C"/>
    <property type="match status" value="1"/>
</dbReference>
<dbReference type="FunFam" id="3.30.360.10:FF:000021">
    <property type="entry name" value="Acetaldehyde dehydrogenase"/>
    <property type="match status" value="1"/>
</dbReference>
<dbReference type="Gene3D" id="3.30.360.10">
    <property type="entry name" value="Dihydrodipicolinate Reductase, domain 2"/>
    <property type="match status" value="1"/>
</dbReference>
<dbReference type="Gene3D" id="3.40.50.720">
    <property type="entry name" value="NAD(P)-binding Rossmann-like Domain"/>
    <property type="match status" value="1"/>
</dbReference>
<dbReference type="HAMAP" id="MF_01657">
    <property type="entry name" value="Ac_ald_DH_ac"/>
    <property type="match status" value="1"/>
</dbReference>
<dbReference type="InterPro" id="IPR003361">
    <property type="entry name" value="Acetaldehyde_dehydrogenase"/>
</dbReference>
<dbReference type="InterPro" id="IPR015426">
    <property type="entry name" value="Acetylaldehyde_DH_C"/>
</dbReference>
<dbReference type="InterPro" id="IPR036291">
    <property type="entry name" value="NAD(P)-bd_dom_sf"/>
</dbReference>
<dbReference type="InterPro" id="IPR000534">
    <property type="entry name" value="Semialdehyde_DH_NAD-bd"/>
</dbReference>
<dbReference type="NCBIfam" id="TIGR03215">
    <property type="entry name" value="ac_ald_DH_ac"/>
    <property type="match status" value="1"/>
</dbReference>
<dbReference type="NCBIfam" id="NF006157">
    <property type="entry name" value="PRK08300.1"/>
    <property type="match status" value="1"/>
</dbReference>
<dbReference type="Pfam" id="PF09290">
    <property type="entry name" value="AcetDehyd-dimer"/>
    <property type="match status" value="1"/>
</dbReference>
<dbReference type="Pfam" id="PF01118">
    <property type="entry name" value="Semialdhyde_dh"/>
    <property type="match status" value="1"/>
</dbReference>
<dbReference type="PIRSF" id="PIRSF015689">
    <property type="entry name" value="Actaldh_dh_actl"/>
    <property type="match status" value="1"/>
</dbReference>
<dbReference type="SMART" id="SM00859">
    <property type="entry name" value="Semialdhyde_dh"/>
    <property type="match status" value="1"/>
</dbReference>
<dbReference type="SUPFAM" id="SSF55347">
    <property type="entry name" value="Glyceraldehyde-3-phosphate dehydrogenase-like, C-terminal domain"/>
    <property type="match status" value="1"/>
</dbReference>
<dbReference type="SUPFAM" id="SSF51735">
    <property type="entry name" value="NAD(P)-binding Rossmann-fold domains"/>
    <property type="match status" value="1"/>
</dbReference>
<keyword id="KW-0058">Aromatic hydrocarbons catabolism</keyword>
<keyword id="KW-0520">NAD</keyword>
<keyword id="KW-0560">Oxidoreductase</keyword>
<keyword id="KW-1185">Reference proteome</keyword>
<reference key="1">
    <citation type="journal article" date="2008" name="J. Bacteriol.">
        <title>The pangenome structure of Escherichia coli: comparative genomic analysis of E. coli commensal and pathogenic isolates.</title>
        <authorList>
            <person name="Rasko D.A."/>
            <person name="Rosovitz M.J."/>
            <person name="Myers G.S.A."/>
            <person name="Mongodin E.F."/>
            <person name="Fricke W.F."/>
            <person name="Gajer P."/>
            <person name="Crabtree J."/>
            <person name="Sebaihia M."/>
            <person name="Thomson N.R."/>
            <person name="Chaudhuri R."/>
            <person name="Henderson I.R."/>
            <person name="Sperandio V."/>
            <person name="Ravel J."/>
        </authorList>
    </citation>
    <scope>NUCLEOTIDE SEQUENCE [LARGE SCALE GENOMIC DNA]</scope>
    <source>
        <strain>E24377A / ETEC</strain>
    </source>
</reference>
<feature type="chain" id="PRO_0000337979" description="Acetaldehyde dehydrogenase">
    <location>
        <begin position="1"/>
        <end position="316"/>
    </location>
</feature>
<feature type="active site" description="Acyl-thioester intermediate" evidence="1">
    <location>
        <position position="131"/>
    </location>
</feature>
<feature type="binding site" evidence="1">
    <location>
        <begin position="11"/>
        <end position="14"/>
    </location>
    <ligand>
        <name>NAD(+)</name>
        <dbReference type="ChEBI" id="CHEBI:57540"/>
    </ligand>
</feature>
<feature type="binding site" evidence="1">
    <location>
        <begin position="162"/>
        <end position="170"/>
    </location>
    <ligand>
        <name>NAD(+)</name>
        <dbReference type="ChEBI" id="CHEBI:57540"/>
    </ligand>
</feature>
<feature type="binding site" evidence="1">
    <location>
        <position position="289"/>
    </location>
    <ligand>
        <name>NAD(+)</name>
        <dbReference type="ChEBI" id="CHEBI:57540"/>
    </ligand>
</feature>
<organism>
    <name type="scientific">Escherichia coli O139:H28 (strain E24377A / ETEC)</name>
    <dbReference type="NCBI Taxonomy" id="331111"/>
    <lineage>
        <taxon>Bacteria</taxon>
        <taxon>Pseudomonadati</taxon>
        <taxon>Pseudomonadota</taxon>
        <taxon>Gammaproteobacteria</taxon>
        <taxon>Enterobacterales</taxon>
        <taxon>Enterobacteriaceae</taxon>
        <taxon>Escherichia</taxon>
    </lineage>
</organism>